<protein>
    <recommendedName>
        <fullName evidence="8">Ribosome assembly factor MRT4</fullName>
    </recommendedName>
    <alternativeName>
        <fullName evidence="7">mRNA turnover protein 4</fullName>
    </alternativeName>
</protein>
<dbReference type="EMBL" id="S53418">
    <property type="protein sequence ID" value="AAB24904.1"/>
    <property type="molecule type" value="Genomic_DNA"/>
</dbReference>
<dbReference type="EMBL" id="X61398">
    <property type="status" value="NOT_ANNOTATED_CDS"/>
    <property type="molecule type" value="Genomic_DNA"/>
</dbReference>
<dbReference type="EMBL" id="Z28009">
    <property type="protein sequence ID" value="CAA81844.1"/>
    <property type="molecule type" value="Genomic_DNA"/>
</dbReference>
<dbReference type="EMBL" id="S59773">
    <property type="protein sequence ID" value="AAC60552.1"/>
    <property type="molecule type" value="Genomic_DNA"/>
</dbReference>
<dbReference type="EMBL" id="BK006944">
    <property type="protein sequence ID" value="DAA09147.1"/>
    <property type="molecule type" value="Genomic_DNA"/>
</dbReference>
<dbReference type="PIR" id="S30013">
    <property type="entry name" value="S30013"/>
</dbReference>
<dbReference type="RefSeq" id="NP_012916.1">
    <property type="nucleotide sequence ID" value="NM_001179575.1"/>
</dbReference>
<dbReference type="PDB" id="3JCT">
    <property type="method" value="EM"/>
    <property type="resolution" value="3.08 A"/>
    <property type="chains" value="W=1-236"/>
</dbReference>
<dbReference type="PDB" id="4V7F">
    <property type="method" value="EM"/>
    <property type="resolution" value="8.70 A"/>
    <property type="chains" value="n=1-236"/>
</dbReference>
<dbReference type="PDB" id="5JCS">
    <property type="method" value="EM"/>
    <property type="resolution" value="9.50 A"/>
    <property type="chains" value="n=1-236"/>
</dbReference>
<dbReference type="PDB" id="6ELZ">
    <property type="method" value="EM"/>
    <property type="resolution" value="3.30 A"/>
    <property type="chains" value="W=1-236"/>
</dbReference>
<dbReference type="PDB" id="6EM1">
    <property type="method" value="EM"/>
    <property type="resolution" value="3.60 A"/>
    <property type="chains" value="W=1-236"/>
</dbReference>
<dbReference type="PDB" id="6EM5">
    <property type="method" value="EM"/>
    <property type="resolution" value="4.30 A"/>
    <property type="chains" value="W=1-236"/>
</dbReference>
<dbReference type="PDB" id="6FT6">
    <property type="method" value="EM"/>
    <property type="resolution" value="3.90 A"/>
    <property type="chains" value="W=1-236"/>
</dbReference>
<dbReference type="PDB" id="6M62">
    <property type="method" value="EM"/>
    <property type="resolution" value="3.20 A"/>
    <property type="chains" value="W=1-236"/>
</dbReference>
<dbReference type="PDB" id="6N8J">
    <property type="method" value="EM"/>
    <property type="resolution" value="3.50 A"/>
    <property type="chains" value="W=1-236"/>
</dbReference>
<dbReference type="PDB" id="6N8K">
    <property type="method" value="EM"/>
    <property type="resolution" value="3.60 A"/>
    <property type="chains" value="W=1-236"/>
</dbReference>
<dbReference type="PDB" id="6N8L">
    <property type="method" value="EM"/>
    <property type="resolution" value="3.60 A"/>
    <property type="chains" value="W=1-236"/>
</dbReference>
<dbReference type="PDB" id="6YLG">
    <property type="method" value="EM"/>
    <property type="resolution" value="3.00 A"/>
    <property type="chains" value="W=1-236"/>
</dbReference>
<dbReference type="PDB" id="6YLH">
    <property type="method" value="EM"/>
    <property type="resolution" value="3.10 A"/>
    <property type="chains" value="W=1-236"/>
</dbReference>
<dbReference type="PDB" id="6YLX">
    <property type="method" value="EM"/>
    <property type="resolution" value="3.90 A"/>
    <property type="chains" value="W=1-236"/>
</dbReference>
<dbReference type="PDB" id="6YLY">
    <property type="method" value="EM"/>
    <property type="resolution" value="3.80 A"/>
    <property type="chains" value="W=1-236"/>
</dbReference>
<dbReference type="PDB" id="7BT6">
    <property type="method" value="EM"/>
    <property type="resolution" value="3.12 A"/>
    <property type="chains" value="W=1-236"/>
</dbReference>
<dbReference type="PDB" id="7BTB">
    <property type="method" value="EM"/>
    <property type="resolution" value="3.22 A"/>
    <property type="chains" value="W=1-236"/>
</dbReference>
<dbReference type="PDB" id="7NAC">
    <property type="method" value="EM"/>
    <property type="resolution" value="3.04 A"/>
    <property type="chains" value="W=1-236"/>
</dbReference>
<dbReference type="PDB" id="7OF1">
    <property type="method" value="EM"/>
    <property type="resolution" value="3.10 A"/>
    <property type="chains" value="W=1-236"/>
</dbReference>
<dbReference type="PDB" id="7OH3">
    <property type="method" value="EM"/>
    <property type="resolution" value="3.40 A"/>
    <property type="chains" value="W=1-236"/>
</dbReference>
<dbReference type="PDB" id="7OHP">
    <property type="method" value="EM"/>
    <property type="resolution" value="3.90 A"/>
    <property type="chains" value="W=1-236"/>
</dbReference>
<dbReference type="PDB" id="7OHQ">
    <property type="method" value="EM"/>
    <property type="resolution" value="3.10 A"/>
    <property type="chains" value="W=1-236"/>
</dbReference>
<dbReference type="PDB" id="7OHR">
    <property type="method" value="EM"/>
    <property type="resolution" value="4.72 A"/>
    <property type="chains" value="W=1-236"/>
</dbReference>
<dbReference type="PDB" id="7OHS">
    <property type="method" value="EM"/>
    <property type="resolution" value="4.38 A"/>
    <property type="chains" value="W=1-236"/>
</dbReference>
<dbReference type="PDB" id="7OHT">
    <property type="method" value="EM"/>
    <property type="resolution" value="4.70 A"/>
    <property type="chains" value="W=1-236"/>
</dbReference>
<dbReference type="PDB" id="7OHU">
    <property type="method" value="EM"/>
    <property type="resolution" value="3.70 A"/>
    <property type="chains" value="W=1-236"/>
</dbReference>
<dbReference type="PDB" id="7OHV">
    <property type="method" value="EM"/>
    <property type="resolution" value="3.90 A"/>
    <property type="chains" value="W=1-236"/>
</dbReference>
<dbReference type="PDB" id="7OHW">
    <property type="method" value="EM"/>
    <property type="resolution" value="3.50 A"/>
    <property type="chains" value="W=1-236"/>
</dbReference>
<dbReference type="PDB" id="7OHX">
    <property type="method" value="EM"/>
    <property type="resolution" value="3.30 A"/>
    <property type="chains" value="W=1-236"/>
</dbReference>
<dbReference type="PDB" id="7OHY">
    <property type="method" value="EM"/>
    <property type="resolution" value="3.90 A"/>
    <property type="chains" value="W=1-236"/>
</dbReference>
<dbReference type="PDB" id="7R7A">
    <property type="method" value="EM"/>
    <property type="resolution" value="3.04 A"/>
    <property type="chains" value="W=1-236"/>
</dbReference>
<dbReference type="PDB" id="7U0H">
    <property type="method" value="EM"/>
    <property type="resolution" value="2.76 A"/>
    <property type="chains" value="W=1-236"/>
</dbReference>
<dbReference type="PDB" id="7UG6">
    <property type="method" value="EM"/>
    <property type="resolution" value="2.90 A"/>
    <property type="chains" value="W=1-236"/>
</dbReference>
<dbReference type="PDB" id="7UOO">
    <property type="method" value="EM"/>
    <property type="resolution" value="2.34 A"/>
    <property type="chains" value="W=1-236"/>
</dbReference>
<dbReference type="PDB" id="7UQB">
    <property type="method" value="EM"/>
    <property type="resolution" value="2.43 A"/>
    <property type="chains" value="W=1-236"/>
</dbReference>
<dbReference type="PDB" id="7UQZ">
    <property type="method" value="EM"/>
    <property type="resolution" value="2.44 A"/>
    <property type="chains" value="W=1-236"/>
</dbReference>
<dbReference type="PDB" id="7V08">
    <property type="method" value="EM"/>
    <property type="resolution" value="2.36 A"/>
    <property type="chains" value="W=1-236"/>
</dbReference>
<dbReference type="PDB" id="7Z34">
    <property type="method" value="EM"/>
    <property type="resolution" value="3.80 A"/>
    <property type="chains" value="W=1-236"/>
</dbReference>
<dbReference type="PDB" id="8HFR">
    <property type="method" value="EM"/>
    <property type="resolution" value="2.64 A"/>
    <property type="chains" value="Wg=1-236"/>
</dbReference>
<dbReference type="PDB" id="8V83">
    <property type="method" value="EM"/>
    <property type="resolution" value="2.53 A"/>
    <property type="chains" value="W=1-236"/>
</dbReference>
<dbReference type="PDB" id="8V84">
    <property type="method" value="EM"/>
    <property type="resolution" value="2.70 A"/>
    <property type="chains" value="W=1-236"/>
</dbReference>
<dbReference type="PDB" id="8V87">
    <property type="method" value="EM"/>
    <property type="resolution" value="2.66 A"/>
    <property type="chains" value="W=1-236"/>
</dbReference>
<dbReference type="PDBsum" id="3JCT"/>
<dbReference type="PDBsum" id="4V7F"/>
<dbReference type="PDBsum" id="5JCS"/>
<dbReference type="PDBsum" id="6ELZ"/>
<dbReference type="PDBsum" id="6EM1"/>
<dbReference type="PDBsum" id="6EM5"/>
<dbReference type="PDBsum" id="6FT6"/>
<dbReference type="PDBsum" id="6M62"/>
<dbReference type="PDBsum" id="6N8J"/>
<dbReference type="PDBsum" id="6N8K"/>
<dbReference type="PDBsum" id="6N8L"/>
<dbReference type="PDBsum" id="6YLG"/>
<dbReference type="PDBsum" id="6YLH"/>
<dbReference type="PDBsum" id="6YLX"/>
<dbReference type="PDBsum" id="6YLY"/>
<dbReference type="PDBsum" id="7BT6"/>
<dbReference type="PDBsum" id="7BTB"/>
<dbReference type="PDBsum" id="7NAC"/>
<dbReference type="PDBsum" id="7OF1"/>
<dbReference type="PDBsum" id="7OH3"/>
<dbReference type="PDBsum" id="7OHP"/>
<dbReference type="PDBsum" id="7OHQ"/>
<dbReference type="PDBsum" id="7OHR"/>
<dbReference type="PDBsum" id="7OHS"/>
<dbReference type="PDBsum" id="7OHT"/>
<dbReference type="PDBsum" id="7OHU"/>
<dbReference type="PDBsum" id="7OHV"/>
<dbReference type="PDBsum" id="7OHW"/>
<dbReference type="PDBsum" id="7OHX"/>
<dbReference type="PDBsum" id="7OHY"/>
<dbReference type="PDBsum" id="7R7A"/>
<dbReference type="PDBsum" id="7U0H"/>
<dbReference type="PDBsum" id="7UG6"/>
<dbReference type="PDBsum" id="7UOO"/>
<dbReference type="PDBsum" id="7UQB"/>
<dbReference type="PDBsum" id="7UQZ"/>
<dbReference type="PDBsum" id="7V08"/>
<dbReference type="PDBsum" id="7Z34"/>
<dbReference type="PDBsum" id="8HFR"/>
<dbReference type="PDBsum" id="8V83"/>
<dbReference type="PDBsum" id="8V84"/>
<dbReference type="PDBsum" id="8V87"/>
<dbReference type="EMDB" id="EMD-0369"/>
<dbReference type="EMDB" id="EMD-0370"/>
<dbReference type="EMDB" id="EMD-0371"/>
<dbReference type="EMDB" id="EMD-10838"/>
<dbReference type="EMDB" id="EMD-10839"/>
<dbReference type="EMDB" id="EMD-10841"/>
<dbReference type="EMDB" id="EMD-10842"/>
<dbReference type="EMDB" id="EMD-12866"/>
<dbReference type="EMDB" id="EMD-12892"/>
<dbReference type="EMDB" id="EMD-12904"/>
<dbReference type="EMDB" id="EMD-12905"/>
<dbReference type="EMDB" id="EMD-12906"/>
<dbReference type="EMDB" id="EMD-12907"/>
<dbReference type="EMDB" id="EMD-12908"/>
<dbReference type="EMDB" id="EMD-12909"/>
<dbReference type="EMDB" id="EMD-12910"/>
<dbReference type="EMDB" id="EMD-12911"/>
<dbReference type="EMDB" id="EMD-12912"/>
<dbReference type="EMDB" id="EMD-12913"/>
<dbReference type="EMDB" id="EMD-14471"/>
<dbReference type="EMDB" id="EMD-24269"/>
<dbReference type="EMDB" id="EMD-24296"/>
<dbReference type="EMDB" id="EMD-26259"/>
<dbReference type="EMDB" id="EMD-26485"/>
<dbReference type="EMDB" id="EMD-26651"/>
<dbReference type="EMDB" id="EMD-26686"/>
<dbReference type="EMDB" id="EMD-26703"/>
<dbReference type="EMDB" id="EMD-26941"/>
<dbReference type="EMDB" id="EMD-30108"/>
<dbReference type="EMDB" id="EMD-30170"/>
<dbReference type="EMDB" id="EMD-30174"/>
<dbReference type="EMDB" id="EMD-34725"/>
<dbReference type="EMDB" id="EMD-43017"/>
<dbReference type="EMDB" id="EMD-4302"/>
<dbReference type="EMDB" id="EMD-43021"/>
<dbReference type="EMDB" id="EMD-43027"/>
<dbReference type="SMR" id="P33201"/>
<dbReference type="BioGRID" id="34123">
    <property type="interactions" value="544"/>
</dbReference>
<dbReference type="DIP" id="DIP-5283N"/>
<dbReference type="FunCoup" id="P33201">
    <property type="interactions" value="1330"/>
</dbReference>
<dbReference type="IntAct" id="P33201">
    <property type="interactions" value="100"/>
</dbReference>
<dbReference type="MINT" id="P33201"/>
<dbReference type="STRING" id="4932.YKL009W"/>
<dbReference type="iPTMnet" id="P33201"/>
<dbReference type="PaxDb" id="4932-YKL009W"/>
<dbReference type="PeptideAtlas" id="P33201"/>
<dbReference type="EnsemblFungi" id="YKL009W_mRNA">
    <property type="protein sequence ID" value="YKL009W"/>
    <property type="gene ID" value="YKL009W"/>
</dbReference>
<dbReference type="GeneID" id="853860"/>
<dbReference type="KEGG" id="sce:YKL009W"/>
<dbReference type="AGR" id="SGD:S000001492"/>
<dbReference type="SGD" id="S000001492">
    <property type="gene designation" value="MRT4"/>
</dbReference>
<dbReference type="VEuPathDB" id="FungiDB:YKL009W"/>
<dbReference type="eggNOG" id="KOG0816">
    <property type="taxonomic scope" value="Eukaryota"/>
</dbReference>
<dbReference type="GeneTree" id="ENSGT00940000168261"/>
<dbReference type="HOGENOM" id="CLU_071690_0_0_1"/>
<dbReference type="InParanoid" id="P33201"/>
<dbReference type="OMA" id="LEWAENY"/>
<dbReference type="OrthoDB" id="10262308at2759"/>
<dbReference type="BioCyc" id="YEAST:G3O-31818-MONOMER"/>
<dbReference type="BioGRID-ORCS" id="853860">
    <property type="hits" value="0 hits in 10 CRISPR screens"/>
</dbReference>
<dbReference type="CD-CODE" id="BDAE0F88">
    <property type="entry name" value="Nucleolus"/>
</dbReference>
<dbReference type="CD-CODE" id="E03F929F">
    <property type="entry name" value="Stress granule"/>
</dbReference>
<dbReference type="PRO" id="PR:P33201"/>
<dbReference type="Proteomes" id="UP000002311">
    <property type="component" value="Chromosome XI"/>
</dbReference>
<dbReference type="RNAct" id="P33201">
    <property type="molecule type" value="protein"/>
</dbReference>
<dbReference type="GO" id="GO:0005737">
    <property type="term" value="C:cytoplasm"/>
    <property type="evidence" value="ECO:0007669"/>
    <property type="project" value="UniProtKB-SubCell"/>
</dbReference>
<dbReference type="GO" id="GO:0005730">
    <property type="term" value="C:nucleolus"/>
    <property type="evidence" value="ECO:0000314"/>
    <property type="project" value="SGD"/>
</dbReference>
<dbReference type="GO" id="GO:0005654">
    <property type="term" value="C:nucleoplasm"/>
    <property type="evidence" value="ECO:0000314"/>
    <property type="project" value="SGD"/>
</dbReference>
<dbReference type="GO" id="GO:0005634">
    <property type="term" value="C:nucleus"/>
    <property type="evidence" value="ECO:0007005"/>
    <property type="project" value="SGD"/>
</dbReference>
<dbReference type="GO" id="GO:0030687">
    <property type="term" value="C:preribosome, large subunit precursor"/>
    <property type="evidence" value="ECO:0000314"/>
    <property type="project" value="SGD"/>
</dbReference>
<dbReference type="GO" id="GO:0032040">
    <property type="term" value="C:small-subunit processome"/>
    <property type="evidence" value="ECO:0000353"/>
    <property type="project" value="ComplexPortal"/>
</dbReference>
<dbReference type="GO" id="GO:0070180">
    <property type="term" value="F:large ribosomal subunit rRNA binding"/>
    <property type="evidence" value="ECO:0000247"/>
    <property type="project" value="SGD"/>
</dbReference>
<dbReference type="GO" id="GO:0030490">
    <property type="term" value="P:maturation of SSU-rRNA"/>
    <property type="evidence" value="ECO:0000303"/>
    <property type="project" value="ComplexPortal"/>
</dbReference>
<dbReference type="GO" id="GO:0000956">
    <property type="term" value="P:nuclear-transcribed mRNA catabolic process"/>
    <property type="evidence" value="ECO:0000315"/>
    <property type="project" value="SGD"/>
</dbReference>
<dbReference type="GO" id="GO:0000027">
    <property type="term" value="P:ribosomal large subunit assembly"/>
    <property type="evidence" value="ECO:0007669"/>
    <property type="project" value="InterPro"/>
</dbReference>
<dbReference type="GO" id="GO:0042273">
    <property type="term" value="P:ribosomal large subunit biogenesis"/>
    <property type="evidence" value="ECO:0000315"/>
    <property type="project" value="SGD"/>
</dbReference>
<dbReference type="GO" id="GO:0000055">
    <property type="term" value="P:ribosomal large subunit export from nucleus"/>
    <property type="evidence" value="ECO:0000315"/>
    <property type="project" value="SGD"/>
</dbReference>
<dbReference type="GO" id="GO:0006364">
    <property type="term" value="P:rRNA processing"/>
    <property type="evidence" value="ECO:0000315"/>
    <property type="project" value="SGD"/>
</dbReference>
<dbReference type="CDD" id="cd05796">
    <property type="entry name" value="Ribosomal_P0_like"/>
    <property type="match status" value="1"/>
</dbReference>
<dbReference type="FunFam" id="3.30.70.1730:FF:000005">
    <property type="entry name" value="Ribosome assembly factor mrt4"/>
    <property type="match status" value="1"/>
</dbReference>
<dbReference type="FunFam" id="3.90.105.20:FF:000003">
    <property type="entry name" value="Ribosome assembly factor mrt4"/>
    <property type="match status" value="1"/>
</dbReference>
<dbReference type="Gene3D" id="3.30.70.1730">
    <property type="match status" value="1"/>
</dbReference>
<dbReference type="Gene3D" id="3.90.105.20">
    <property type="match status" value="1"/>
</dbReference>
<dbReference type="InterPro" id="IPR033867">
    <property type="entry name" value="Mrt4"/>
</dbReference>
<dbReference type="InterPro" id="IPR001790">
    <property type="entry name" value="Ribosomal_uL10"/>
</dbReference>
<dbReference type="InterPro" id="IPR040637">
    <property type="entry name" value="Ribosomal_uL10-like_insert"/>
</dbReference>
<dbReference type="InterPro" id="IPR043164">
    <property type="entry name" value="Ribosomal_uL10-like_insert_sf"/>
</dbReference>
<dbReference type="InterPro" id="IPR043141">
    <property type="entry name" value="Ribosomal_uL10-like_sf"/>
</dbReference>
<dbReference type="InterPro" id="IPR051742">
    <property type="entry name" value="Ribosome_Assembly_uL10"/>
</dbReference>
<dbReference type="PANTHER" id="PTHR45841:SF1">
    <property type="entry name" value="MRNA TURNOVER PROTEIN 4 HOMOLOG"/>
    <property type="match status" value="1"/>
</dbReference>
<dbReference type="PANTHER" id="PTHR45841">
    <property type="entry name" value="MRNA TURNOVER PROTEIN 4 MRTO4"/>
    <property type="match status" value="1"/>
</dbReference>
<dbReference type="Pfam" id="PF00466">
    <property type="entry name" value="Ribosomal_L10"/>
    <property type="match status" value="1"/>
</dbReference>
<dbReference type="Pfam" id="PF17777">
    <property type="entry name" value="RL10P_insert"/>
    <property type="match status" value="1"/>
</dbReference>
<dbReference type="SUPFAM" id="SSF160369">
    <property type="entry name" value="Ribosomal protein L10-like"/>
    <property type="match status" value="1"/>
</dbReference>
<sequence>MPRSKRSKLVTLAQTDKKGRENKERIFDEVREALDTYRYVWVLHLDDVRTPVLQEIRTSWAGSKLIMGKRKVLQKALGEKREEEYKENLYQLSKLCSGVTGLLFTDEDVNTVKEYFKSYVRSDYSRPNTKAPLTFTIPEGIVYSRGGQIPAEEDVPMIHSLEPTMRNKFEIPTKIKAGKITIDSPYLVCTEGEKLDVRQALILKQFGIAASEFKVKVSAYYDNDSSTVESTNINME</sequence>
<organism>
    <name type="scientific">Saccharomyces cerevisiae (strain ATCC 204508 / S288c)</name>
    <name type="common">Baker's yeast</name>
    <dbReference type="NCBI Taxonomy" id="559292"/>
    <lineage>
        <taxon>Eukaryota</taxon>
        <taxon>Fungi</taxon>
        <taxon>Dikarya</taxon>
        <taxon>Ascomycota</taxon>
        <taxon>Saccharomycotina</taxon>
        <taxon>Saccharomycetes</taxon>
        <taxon>Saccharomycetales</taxon>
        <taxon>Saccharomycetaceae</taxon>
        <taxon>Saccharomyces</taxon>
    </lineage>
</organism>
<name>MRT4_YEAST</name>
<evidence type="ECO:0000269" key="1">
    <source>
    </source>
</evidence>
<evidence type="ECO:0000269" key="2">
    <source>
    </source>
</evidence>
<evidence type="ECO:0000269" key="3">
    <source>
    </source>
</evidence>
<evidence type="ECO:0000269" key="4">
    <source>
    </source>
</evidence>
<evidence type="ECO:0000269" key="5">
    <source>
    </source>
</evidence>
<evidence type="ECO:0000269" key="6">
    <source>
    </source>
</evidence>
<evidence type="ECO:0000303" key="7">
    <source>
    </source>
</evidence>
<evidence type="ECO:0000303" key="8">
    <source>
    </source>
</evidence>
<evidence type="ECO:0000305" key="9"/>
<evidence type="ECO:0000312" key="10">
    <source>
        <dbReference type="SGD" id="S000001492"/>
    </source>
</evidence>
<reference key="1">
    <citation type="journal article" date="1992" name="Yeast">
        <title>The sequence of a 9.3 kb segment located on the left arm of the yeast chromosome XI reveals five open reading frames including the CCE1 gene and putative products related to MYO2 and to the ribosomal protein L10.</title>
        <authorList>
            <person name="Pascolo S."/>
            <person name="Ghazvini M."/>
            <person name="Boyer J."/>
            <person name="Colleaux L."/>
            <person name="Thierry A."/>
            <person name="Dujon B."/>
        </authorList>
    </citation>
    <scope>NUCLEOTIDE SEQUENCE [GENOMIC DNA]</scope>
</reference>
<reference key="2">
    <citation type="journal article" date="1994" name="Nature">
        <title>Complete DNA sequence of yeast chromosome XI.</title>
        <authorList>
            <person name="Dujon B."/>
            <person name="Alexandraki D."/>
            <person name="Andre B."/>
            <person name="Ansorge W."/>
            <person name="Baladron V."/>
            <person name="Ballesta J.P.G."/>
            <person name="Banrevi A."/>
            <person name="Bolle P.-A."/>
            <person name="Bolotin-Fukuhara M."/>
            <person name="Bossier P."/>
            <person name="Bou G."/>
            <person name="Boyer J."/>
            <person name="Buitrago M.J."/>
            <person name="Cheret G."/>
            <person name="Colleaux L."/>
            <person name="Daignan-Fornier B."/>
            <person name="del Rey F."/>
            <person name="Dion C."/>
            <person name="Domdey H."/>
            <person name="Duesterhoeft A."/>
            <person name="Duesterhus S."/>
            <person name="Entian K.-D."/>
            <person name="Erfle H."/>
            <person name="Esteban P.F."/>
            <person name="Feldmann H."/>
            <person name="Fernandes L."/>
            <person name="Fobo G.M."/>
            <person name="Fritz C."/>
            <person name="Fukuhara H."/>
            <person name="Gabel C."/>
            <person name="Gaillon L."/>
            <person name="Garcia-Cantalejo J.M."/>
            <person name="Garcia-Ramirez J.J."/>
            <person name="Gent M.E."/>
            <person name="Ghazvini M."/>
            <person name="Goffeau A."/>
            <person name="Gonzalez A."/>
            <person name="Grothues D."/>
            <person name="Guerreiro P."/>
            <person name="Hegemann J.H."/>
            <person name="Hewitt N."/>
            <person name="Hilger F."/>
            <person name="Hollenberg C.P."/>
            <person name="Horaitis O."/>
            <person name="Indge K.J."/>
            <person name="Jacquier A."/>
            <person name="James C.M."/>
            <person name="Jauniaux J.-C."/>
            <person name="Jimenez A."/>
            <person name="Keuchel H."/>
            <person name="Kirchrath L."/>
            <person name="Kleine K."/>
            <person name="Koetter P."/>
            <person name="Legrain P."/>
            <person name="Liebl S."/>
            <person name="Louis E.J."/>
            <person name="Maia e Silva A."/>
            <person name="Marck C."/>
            <person name="Monnier A.-L."/>
            <person name="Moestl D."/>
            <person name="Mueller S."/>
            <person name="Obermaier B."/>
            <person name="Oliver S.G."/>
            <person name="Pallier C."/>
            <person name="Pascolo S."/>
            <person name="Pfeiffer F."/>
            <person name="Philippsen P."/>
            <person name="Planta R.J."/>
            <person name="Pohl F.M."/>
            <person name="Pohl T.M."/>
            <person name="Poehlmann R."/>
            <person name="Portetelle D."/>
            <person name="Purnelle B."/>
            <person name="Puzos V."/>
            <person name="Ramezani Rad M."/>
            <person name="Rasmussen S.W."/>
            <person name="Remacha M.A."/>
            <person name="Revuelta J.L."/>
            <person name="Richard G.-F."/>
            <person name="Rieger M."/>
            <person name="Rodrigues-Pousada C."/>
            <person name="Rose M."/>
            <person name="Rupp T."/>
            <person name="Santos M.A."/>
            <person name="Schwager C."/>
            <person name="Sensen C."/>
            <person name="Skala J."/>
            <person name="Soares H."/>
            <person name="Sor F."/>
            <person name="Stegemann J."/>
            <person name="Tettelin H."/>
            <person name="Thierry A."/>
            <person name="Tzermia M."/>
            <person name="Urrestarazu L.A."/>
            <person name="van Dyck L."/>
            <person name="van Vliet-Reedijk J.C."/>
            <person name="Valens M."/>
            <person name="Vandenbol M."/>
            <person name="Vilela C."/>
            <person name="Vissers S."/>
            <person name="von Wettstein D."/>
            <person name="Voss H."/>
            <person name="Wiemann S."/>
            <person name="Xu G."/>
            <person name="Zimmermann J."/>
            <person name="Haasemann M."/>
            <person name="Becker I."/>
            <person name="Mewes H.-W."/>
        </authorList>
    </citation>
    <scope>NUCLEOTIDE SEQUENCE [LARGE SCALE GENOMIC DNA]</scope>
    <source>
        <strain>ATCC 204508 / S288c</strain>
    </source>
</reference>
<reference key="3">
    <citation type="journal article" date="2014" name="G3 (Bethesda)">
        <title>The reference genome sequence of Saccharomyces cerevisiae: Then and now.</title>
        <authorList>
            <person name="Engel S.R."/>
            <person name="Dietrich F.S."/>
            <person name="Fisk D.G."/>
            <person name="Binkley G."/>
            <person name="Balakrishnan R."/>
            <person name="Costanzo M.C."/>
            <person name="Dwight S.S."/>
            <person name="Hitz B.C."/>
            <person name="Karra K."/>
            <person name="Nash R.S."/>
            <person name="Weng S."/>
            <person name="Wong E.D."/>
            <person name="Lloyd P."/>
            <person name="Skrzypek M.S."/>
            <person name="Miyasato S.R."/>
            <person name="Simison M."/>
            <person name="Cherry J.M."/>
        </authorList>
    </citation>
    <scope>GENOME REANNOTATION</scope>
    <source>
        <strain>ATCC 204508 / S288c</strain>
    </source>
</reference>
<reference key="4">
    <citation type="journal article" date="1993" name="Yeast">
        <title>Sequence of a 7.8 kb segment on the left arm of yeast chromosome XI reveals four open reading frames, including the CAP1 gene, an intron-containing gene and a gene encoding a homolog to the mammalian UOG-1 gene.</title>
        <authorList>
            <person name="Boyer J."/>
            <person name="Pascolo S."/>
            <person name="Richard G.-F."/>
            <person name="Dujon B."/>
        </authorList>
    </citation>
    <scope>NUCLEOTIDE SEQUENCE [GENOMIC DNA] OF 190-236</scope>
</reference>
<reference key="5">
    <citation type="journal article" date="1999" name="Genetics">
        <title>Temperature-sensitive mutations in the Saccharomyces cerevisiae MRT4, GRC5, SLA2 and THS1 genes result in defects in mRNA turnover.</title>
        <authorList>
            <person name="Zuk D."/>
            <person name="Belk J.P."/>
            <person name="Jacobson A."/>
        </authorList>
    </citation>
    <scope>GENE NAME</scope>
    <scope>INVOLVEMENT IN MRNA TURNOVER</scope>
</reference>
<reference key="6">
    <citation type="journal article" date="2001" name="Mol. Cell">
        <title>Composition and functional characterization of yeast 66S ribosome assembly intermediates.</title>
        <authorList>
            <person name="Harnpicharnchai P."/>
            <person name="Jakovljevic J."/>
            <person name="Horsey E."/>
            <person name="Miles T."/>
            <person name="Roman J."/>
            <person name="Rout M."/>
            <person name="Meagher D."/>
            <person name="Imai B."/>
            <person name="Guo Y."/>
            <person name="Brame C.J."/>
            <person name="Shabanowitz J."/>
            <person name="Hunt D.F."/>
            <person name="Woolford J.L. Jr."/>
        </authorList>
    </citation>
    <scope>SUBCELLULAR LOCATION</scope>
    <scope>INVOLVEMENT IN RIBOSOME BIOGENESIS</scope>
</reference>
<reference key="7">
    <citation type="journal article" date="2003" name="Nature">
        <title>Global analysis of protein expression in yeast.</title>
        <authorList>
            <person name="Ghaemmaghami S."/>
            <person name="Huh W.-K."/>
            <person name="Bower K."/>
            <person name="Howson R.W."/>
            <person name="Belle A."/>
            <person name="Dephoure N."/>
            <person name="O'Shea E.K."/>
            <person name="Weissman J.S."/>
        </authorList>
    </citation>
    <scope>LEVEL OF PROTEIN EXPRESSION [LARGE SCALE ANALYSIS]</scope>
</reference>
<reference key="8">
    <citation type="journal article" date="2008" name="Mol. Cell. Proteomics">
        <title>A multidimensional chromatography technology for in-depth phosphoproteome analysis.</title>
        <authorList>
            <person name="Albuquerque C.P."/>
            <person name="Smolka M.B."/>
            <person name="Payne S.H."/>
            <person name="Bafna V."/>
            <person name="Eng J."/>
            <person name="Zhou H."/>
        </authorList>
    </citation>
    <scope>IDENTIFICATION BY MASS SPECTROMETRY [LARGE SCALE ANALYSIS]</scope>
</reference>
<reference key="9">
    <citation type="journal article" date="2009" name="J. Cell Biol.">
        <title>Ribosome stalk assembly requires the dual-specificity phosphatase Yvh1 for the exchange of Mrt4 with P0.</title>
        <authorList>
            <person name="Lo K.Y."/>
            <person name="Li Z."/>
            <person name="Wang F."/>
            <person name="Marcotte E.M."/>
            <person name="Johnson A.W."/>
        </authorList>
    </citation>
    <scope>FUNCTION</scope>
    <scope>SUBUNIT</scope>
    <scope>MUTAGENESIS OF GLY-68</scope>
</reference>
<reference key="10">
    <citation type="journal article" date="2009" name="Nucleic Acids Res.">
        <title>The amino terminal domain from Mrt4 protein can functionally replace the RNA binding domain of the ribosomal P0 protein.</title>
        <authorList>
            <person name="Rodriguez-Mateos M."/>
            <person name="Abia D."/>
            <person name="Garcia-Gomez J.J."/>
            <person name="Morreale A."/>
            <person name="de la Cruz J."/>
            <person name="Santos C."/>
            <person name="Remacha M."/>
            <person name="Ballesta J.P."/>
        </authorList>
    </citation>
    <scope>FUNCTION</scope>
    <scope>SUBUNIT</scope>
</reference>
<reference key="11">
    <citation type="journal article" date="2009" name="Nucleic Acids Res.">
        <title>Role and dynamics of the ribosomal protein P0 and its related trans-acting factor Mrt4 during ribosome assembly in Saccharomyces cerevisiae.</title>
        <authorList>
            <person name="Rodriguez-Mateos M."/>
            <person name="Garcia-Gomez J.J."/>
            <person name="Francisco-Velilla R."/>
            <person name="Remacha M."/>
            <person name="de la Cruz J."/>
            <person name="Ballesta J.P."/>
        </authorList>
    </citation>
    <scope>FUNCTION</scope>
    <scope>SUBUNIT</scope>
    <scope>SUBCELLULAR LOCATION</scope>
</reference>
<reference key="12">
    <citation type="journal article" date="2014" name="Nat. Commun.">
        <title>60S ribosome biogenesis requires rotation of the 5S ribonucleoprotein particle.</title>
        <authorList>
            <person name="Leidig C."/>
            <person name="Thoms M."/>
            <person name="Holdermann I."/>
            <person name="Bradatsch B."/>
            <person name="Berninghausen O."/>
            <person name="Bange G."/>
            <person name="Sinning I."/>
            <person name="Hurt E."/>
            <person name="Beckmann R."/>
        </authorList>
    </citation>
    <scope>STRUCTURE BY ELECTRON MICROSCOPY (8.70 ANGSTROMS)</scope>
</reference>
<feature type="chain" id="PRO_0000154815" description="Ribosome assembly factor MRT4">
    <location>
        <begin position="1"/>
        <end position="236"/>
    </location>
</feature>
<feature type="mutagenesis site" description="Bypasses the requirement for phosphatase YVH1 for the release of MRT4." evidence="6">
    <original>G</original>
    <variation>D</variation>
    <location>
        <position position="68"/>
    </location>
</feature>
<keyword id="KW-0002">3D-structure</keyword>
<keyword id="KW-0963">Cytoplasm</keyword>
<keyword id="KW-0539">Nucleus</keyword>
<keyword id="KW-1185">Reference proteome</keyword>
<keyword id="KW-0690">Ribosome biogenesis</keyword>
<comment type="function">
    <text evidence="1 4 5 6">Component of the ribosome assembly machinery. Nuclear paralog of the ribosomal protein P0, it binds pre-60S subunits at an early stage of assembly in the nucleolus, and is replaced by P0 in cytoplasmic pre-60S subunits and mature 80S ribosomes.</text>
</comment>
<comment type="subunit">
    <text evidence="2 4 5 6">Associates with the pre-60S ribosomal particle.</text>
</comment>
<comment type="subcellular location">
    <subcellularLocation>
        <location evidence="2 5">Nucleus</location>
        <location evidence="2 5">Nucleolus</location>
    </subcellularLocation>
    <subcellularLocation>
        <location evidence="5">Cytoplasm</location>
    </subcellularLocation>
    <text evidence="5">Shuttles between the nucleus and the cytoplasm.</text>
</comment>
<comment type="miscellaneous">
    <text evidence="3">Present with 18200 molecules/cell in log phase SD medium.</text>
</comment>
<comment type="similarity">
    <text evidence="9">Belongs to the universal ribosomal protein uL10 family.</text>
</comment>
<gene>
    <name evidence="7" type="primary">MRT4</name>
    <name evidence="10" type="ordered locus">YKL009W</name>
    <name type="ORF">YKL160</name>
</gene>
<accession>P33201</accession>
<accession>D6VXS7</accession>
<proteinExistence type="evidence at protein level"/>